<proteinExistence type="predicted"/>
<sequence>MHPTLKSNAGEWSQPIVNLFYSNFSGNCKALLQYIDNAGITDHIPIKFINVDNPTMRSVVSAKISHVPALVVLQDDQMSLYVAESVWEWFDNYRTPPPLADGATVDSQASENGEKEAQPTPPKEGLLTVLELAKQMRKEREQQT</sequence>
<keyword id="KW-1185">Reference proteome</keyword>
<name>030L_IIV3</name>
<protein>
    <recommendedName>
        <fullName>uncharacterized protein 030L</fullName>
    </recommendedName>
</protein>
<dbReference type="EMBL" id="DQ643392">
    <property type="protein sequence ID" value="ABF82060.1"/>
    <property type="molecule type" value="Genomic_DNA"/>
</dbReference>
<dbReference type="RefSeq" id="YP_654602.1">
    <property type="nucleotide sequence ID" value="NC_008187.1"/>
</dbReference>
<dbReference type="SMR" id="Q197D0"/>
<dbReference type="KEGG" id="vg:4156340"/>
<dbReference type="OrthoDB" id="27020at10239"/>
<dbReference type="Proteomes" id="UP000001358">
    <property type="component" value="Genome"/>
</dbReference>
<dbReference type="CDD" id="cd01659">
    <property type="entry name" value="TRX_superfamily"/>
    <property type="match status" value="1"/>
</dbReference>
<dbReference type="InterPro" id="IPR036249">
    <property type="entry name" value="Thioredoxin-like_sf"/>
</dbReference>
<dbReference type="SUPFAM" id="SSF52833">
    <property type="entry name" value="Thioredoxin-like"/>
    <property type="match status" value="1"/>
</dbReference>
<gene>
    <name type="ORF">IIV3-030L</name>
</gene>
<accession>Q197D0</accession>
<feature type="chain" id="PRO_0000377948" description="uncharacterized protein 030L">
    <location>
        <begin position="1"/>
        <end position="144"/>
    </location>
</feature>
<feature type="region of interest" description="Disordered" evidence="1">
    <location>
        <begin position="98"/>
        <end position="127"/>
    </location>
</feature>
<organismHost>
    <name type="scientific">Aedes vexans</name>
    <name type="common">Inland floodwater mosquito</name>
    <name type="synonym">Culex vexans</name>
    <dbReference type="NCBI Taxonomy" id="7163"/>
</organismHost>
<organismHost>
    <name type="scientific">Culex territans</name>
    <dbReference type="NCBI Taxonomy" id="42431"/>
</organismHost>
<organismHost>
    <name type="scientific">Culiseta annulata</name>
    <dbReference type="NCBI Taxonomy" id="332058"/>
</organismHost>
<organismHost>
    <name type="scientific">Ochlerotatus sollicitans</name>
    <name type="common">eastern saltmarsh mosquito</name>
    <dbReference type="NCBI Taxonomy" id="310513"/>
</organismHost>
<organismHost>
    <name type="scientific">Ochlerotatus taeniorhynchus</name>
    <name type="common">Black salt marsh mosquito</name>
    <name type="synonym">Aedes taeniorhynchus</name>
    <dbReference type="NCBI Taxonomy" id="329105"/>
</organismHost>
<organismHost>
    <name type="scientific">Psorophora ferox</name>
    <dbReference type="NCBI Taxonomy" id="7183"/>
</organismHost>
<evidence type="ECO:0000256" key="1">
    <source>
        <dbReference type="SAM" id="MobiDB-lite"/>
    </source>
</evidence>
<reference key="1">
    <citation type="journal article" date="2006" name="J. Virol.">
        <title>Genome of invertebrate iridescent virus type 3 (mosquito iridescent virus).</title>
        <authorList>
            <person name="Delhon G."/>
            <person name="Tulman E.R."/>
            <person name="Afonso C.L."/>
            <person name="Lu Z."/>
            <person name="Becnel J.J."/>
            <person name="Moser B.A."/>
            <person name="Kutish G.F."/>
            <person name="Rock D.L."/>
        </authorList>
    </citation>
    <scope>NUCLEOTIDE SEQUENCE [LARGE SCALE GENOMIC DNA]</scope>
</reference>
<organism>
    <name type="scientific">Invertebrate iridescent virus 3</name>
    <name type="common">IIV-3</name>
    <name type="synonym">Mosquito iridescent virus</name>
    <dbReference type="NCBI Taxonomy" id="345201"/>
    <lineage>
        <taxon>Viruses</taxon>
        <taxon>Varidnaviria</taxon>
        <taxon>Bamfordvirae</taxon>
        <taxon>Nucleocytoviricota</taxon>
        <taxon>Megaviricetes</taxon>
        <taxon>Pimascovirales</taxon>
        <taxon>Iridoviridae</taxon>
        <taxon>Betairidovirinae</taxon>
        <taxon>Chloriridovirus</taxon>
    </lineage>
</organism>